<organism>
    <name type="scientific">Escherichia coli O1:K1 / APEC</name>
    <dbReference type="NCBI Taxonomy" id="405955"/>
    <lineage>
        <taxon>Bacteria</taxon>
        <taxon>Pseudomonadati</taxon>
        <taxon>Pseudomonadota</taxon>
        <taxon>Gammaproteobacteria</taxon>
        <taxon>Enterobacterales</taxon>
        <taxon>Enterobacteriaceae</taxon>
        <taxon>Escherichia</taxon>
    </lineage>
</organism>
<dbReference type="EC" id="6.1.1.4" evidence="1"/>
<dbReference type="EMBL" id="CP000468">
    <property type="protein sequence ID" value="ABJ00057.1"/>
    <property type="status" value="ALT_INIT"/>
    <property type="molecule type" value="Genomic_DNA"/>
</dbReference>
<dbReference type="RefSeq" id="WP_001362899.1">
    <property type="nucleotide sequence ID" value="NZ_CADILS010000006.1"/>
</dbReference>
<dbReference type="SMR" id="A1A8R7"/>
<dbReference type="KEGG" id="ecv:APECO1_14132"/>
<dbReference type="HOGENOM" id="CLU_004427_0_0_6"/>
<dbReference type="Proteomes" id="UP000008216">
    <property type="component" value="Chromosome"/>
</dbReference>
<dbReference type="GO" id="GO:0005829">
    <property type="term" value="C:cytosol"/>
    <property type="evidence" value="ECO:0007669"/>
    <property type="project" value="TreeGrafter"/>
</dbReference>
<dbReference type="GO" id="GO:0002161">
    <property type="term" value="F:aminoacyl-tRNA deacylase activity"/>
    <property type="evidence" value="ECO:0007669"/>
    <property type="project" value="InterPro"/>
</dbReference>
<dbReference type="GO" id="GO:0005524">
    <property type="term" value="F:ATP binding"/>
    <property type="evidence" value="ECO:0007669"/>
    <property type="project" value="UniProtKB-UniRule"/>
</dbReference>
<dbReference type="GO" id="GO:0004823">
    <property type="term" value="F:leucine-tRNA ligase activity"/>
    <property type="evidence" value="ECO:0007669"/>
    <property type="project" value="UniProtKB-UniRule"/>
</dbReference>
<dbReference type="GO" id="GO:0006429">
    <property type="term" value="P:leucyl-tRNA aminoacylation"/>
    <property type="evidence" value="ECO:0007669"/>
    <property type="project" value="UniProtKB-UniRule"/>
</dbReference>
<dbReference type="CDD" id="cd07958">
    <property type="entry name" value="Anticodon_Ia_Leu_BEm"/>
    <property type="match status" value="1"/>
</dbReference>
<dbReference type="CDD" id="cd00812">
    <property type="entry name" value="LeuRS_core"/>
    <property type="match status" value="1"/>
</dbReference>
<dbReference type="FunFam" id="1.10.730.10:FF:000002">
    <property type="entry name" value="Leucine--tRNA ligase"/>
    <property type="match status" value="2"/>
</dbReference>
<dbReference type="FunFam" id="2.20.28.290:FF:000001">
    <property type="entry name" value="Leucine--tRNA ligase"/>
    <property type="match status" value="1"/>
</dbReference>
<dbReference type="FunFam" id="3.10.20.590:FF:000001">
    <property type="entry name" value="Leucine--tRNA ligase"/>
    <property type="match status" value="1"/>
</dbReference>
<dbReference type="FunFam" id="3.40.50.620:FF:000003">
    <property type="entry name" value="Leucine--tRNA ligase"/>
    <property type="match status" value="1"/>
</dbReference>
<dbReference type="FunFam" id="3.40.50.620:FF:000124">
    <property type="entry name" value="Leucine--tRNA ligase"/>
    <property type="match status" value="1"/>
</dbReference>
<dbReference type="FunFam" id="3.90.740.10:FF:000012">
    <property type="entry name" value="Leucine--tRNA ligase"/>
    <property type="match status" value="1"/>
</dbReference>
<dbReference type="Gene3D" id="2.20.28.290">
    <property type="match status" value="1"/>
</dbReference>
<dbReference type="Gene3D" id="3.10.20.590">
    <property type="match status" value="1"/>
</dbReference>
<dbReference type="Gene3D" id="3.40.50.620">
    <property type="entry name" value="HUPs"/>
    <property type="match status" value="2"/>
</dbReference>
<dbReference type="Gene3D" id="1.10.730.10">
    <property type="entry name" value="Isoleucyl-tRNA Synthetase, Domain 1"/>
    <property type="match status" value="1"/>
</dbReference>
<dbReference type="HAMAP" id="MF_00049_B">
    <property type="entry name" value="Leu_tRNA_synth_B"/>
    <property type="match status" value="1"/>
</dbReference>
<dbReference type="InterPro" id="IPR001412">
    <property type="entry name" value="aa-tRNA-synth_I_CS"/>
</dbReference>
<dbReference type="InterPro" id="IPR002300">
    <property type="entry name" value="aa-tRNA-synth_Ia"/>
</dbReference>
<dbReference type="InterPro" id="IPR002302">
    <property type="entry name" value="Leu-tRNA-ligase"/>
</dbReference>
<dbReference type="InterPro" id="IPR025709">
    <property type="entry name" value="Leu_tRNA-synth_edit"/>
</dbReference>
<dbReference type="InterPro" id="IPR013155">
    <property type="entry name" value="M/V/L/I-tRNA-synth_anticd-bd"/>
</dbReference>
<dbReference type="InterPro" id="IPR015413">
    <property type="entry name" value="Methionyl/Leucyl_tRNA_Synth"/>
</dbReference>
<dbReference type="InterPro" id="IPR014729">
    <property type="entry name" value="Rossmann-like_a/b/a_fold"/>
</dbReference>
<dbReference type="InterPro" id="IPR009080">
    <property type="entry name" value="tRNAsynth_Ia_anticodon-bd"/>
</dbReference>
<dbReference type="InterPro" id="IPR009008">
    <property type="entry name" value="Val/Leu/Ile-tRNA-synth_edit"/>
</dbReference>
<dbReference type="NCBIfam" id="TIGR00396">
    <property type="entry name" value="leuS_bact"/>
    <property type="match status" value="1"/>
</dbReference>
<dbReference type="PANTHER" id="PTHR43740:SF2">
    <property type="entry name" value="LEUCINE--TRNA LIGASE, MITOCHONDRIAL"/>
    <property type="match status" value="1"/>
</dbReference>
<dbReference type="PANTHER" id="PTHR43740">
    <property type="entry name" value="LEUCYL-TRNA SYNTHETASE"/>
    <property type="match status" value="1"/>
</dbReference>
<dbReference type="Pfam" id="PF08264">
    <property type="entry name" value="Anticodon_1"/>
    <property type="match status" value="1"/>
</dbReference>
<dbReference type="Pfam" id="PF00133">
    <property type="entry name" value="tRNA-synt_1"/>
    <property type="match status" value="2"/>
</dbReference>
<dbReference type="Pfam" id="PF13603">
    <property type="entry name" value="tRNA-synt_1_2"/>
    <property type="match status" value="1"/>
</dbReference>
<dbReference type="Pfam" id="PF09334">
    <property type="entry name" value="tRNA-synt_1g"/>
    <property type="match status" value="1"/>
</dbReference>
<dbReference type="PRINTS" id="PR00985">
    <property type="entry name" value="TRNASYNTHLEU"/>
</dbReference>
<dbReference type="SUPFAM" id="SSF47323">
    <property type="entry name" value="Anticodon-binding domain of a subclass of class I aminoacyl-tRNA synthetases"/>
    <property type="match status" value="1"/>
</dbReference>
<dbReference type="SUPFAM" id="SSF52374">
    <property type="entry name" value="Nucleotidylyl transferase"/>
    <property type="match status" value="1"/>
</dbReference>
<dbReference type="SUPFAM" id="SSF50677">
    <property type="entry name" value="ValRS/IleRS/LeuRS editing domain"/>
    <property type="match status" value="1"/>
</dbReference>
<dbReference type="PROSITE" id="PS00178">
    <property type="entry name" value="AA_TRNA_LIGASE_I"/>
    <property type="match status" value="1"/>
</dbReference>
<accession>A1A8R7</accession>
<feature type="chain" id="PRO_0000334757" description="Leucine--tRNA ligase">
    <location>
        <begin position="1"/>
        <end position="860"/>
    </location>
</feature>
<feature type="short sequence motif" description="'HIGH' region">
    <location>
        <begin position="42"/>
        <end position="52"/>
    </location>
</feature>
<feature type="short sequence motif" description="'KMSKS' region">
    <location>
        <begin position="619"/>
        <end position="623"/>
    </location>
</feature>
<feature type="binding site" evidence="1">
    <location>
        <position position="622"/>
    </location>
    <ligand>
        <name>ATP</name>
        <dbReference type="ChEBI" id="CHEBI:30616"/>
    </ligand>
</feature>
<evidence type="ECO:0000255" key="1">
    <source>
        <dbReference type="HAMAP-Rule" id="MF_00049"/>
    </source>
</evidence>
<evidence type="ECO:0000305" key="2"/>
<reference key="1">
    <citation type="journal article" date="2007" name="J. Bacteriol.">
        <title>The genome sequence of avian pathogenic Escherichia coli strain O1:K1:H7 shares strong similarities with human extraintestinal pathogenic E. coli genomes.</title>
        <authorList>
            <person name="Johnson T.J."/>
            <person name="Kariyawasam S."/>
            <person name="Wannemuehler Y."/>
            <person name="Mangiamele P."/>
            <person name="Johnson S.J."/>
            <person name="Doetkott C."/>
            <person name="Skyberg J.A."/>
            <person name="Lynne A.M."/>
            <person name="Johnson J.R."/>
            <person name="Nolan L.K."/>
        </authorList>
    </citation>
    <scope>NUCLEOTIDE SEQUENCE [LARGE SCALE GENOMIC DNA]</scope>
</reference>
<name>SYL_ECOK1</name>
<keyword id="KW-0030">Aminoacyl-tRNA synthetase</keyword>
<keyword id="KW-0067">ATP-binding</keyword>
<keyword id="KW-0963">Cytoplasm</keyword>
<keyword id="KW-0436">Ligase</keyword>
<keyword id="KW-0547">Nucleotide-binding</keyword>
<keyword id="KW-0648">Protein biosynthesis</keyword>
<keyword id="KW-1185">Reference proteome</keyword>
<sequence length="860" mass="97307">MQEQYRPEEIESKVQLHWDEKRTFEVTEDESKEKYYCLSMLPYPSGRLHMGHVRNYTIGDVIARYQRMLGKNVLQPIGWDAFGLPAEGAAVKNNTAPAPWTYDNIAYMKNQLKMLGFGYDWSRELATCTPEYYRWEQKFFTELYKKGLVYKKTSAVNWCPNDQTVLANEQVIDGCCWRCDTKVERKEIPQWFIKITAYADELLNDLDKLDHWPDTVKTMQRNWIGRSEGVEITFNVKDYDNTLTVYTTRPDTFMGCTYLAVAAGHPLAQKAAENNPELAAFIDECRNTKVAEAEMATMEKKGVDTGFKAVHPLTGEEIPVWAANFVLMEYGTGAVMAVPGHDQRDYEFASKYGLNIKPVILAADGSEPDLSQQALTEKGVLFNSGEFNGLDHEAAFNAIADKLTEMGVGERKVNYRLRDWGVSRQRYWGAPIPMVTLEDGTVMPTPDDQLPVILPEDVVMDGITSPIKADPEWAKTTVNGMPALRETDTFDTFMESSWYYARYTCPEYKEGMLDSKAANYWLPVDIYIGGIEHAIMHLLYFRFFHKLMRDAGMVNSDEPAKQLLCQGMVLADAFYYVGENGERNWVSPVDAIVERDEKGRIVKAKDAAGHELVYTGMSKMSKSKNNGIDPQVMVERYGADTVRLFMMFASPADMTLEWQESGVEGANRFLKRVWKLVYEHTAKGDVAALNVDALTEDQKALRRDVHKTIAKVTDDIGRRQTFNTAIAAIMELMNKLAKAPTDGEQDRALMQEALLAVVRMLNPFTPHICFTLWQELKGEGDIDNAPWPVADEKAMVEDSTLVVVQVNGKVRAKITVPVDATEEQVRERAGQEHLVAKYLDGVTVRKVIYVPGKLLNLVVG</sequence>
<gene>
    <name evidence="1" type="primary">leuS</name>
    <name type="ordered locus">Ecok1_05630</name>
    <name type="ORF">APECO1_14132</name>
</gene>
<comment type="catalytic activity">
    <reaction evidence="1">
        <text>tRNA(Leu) + L-leucine + ATP = L-leucyl-tRNA(Leu) + AMP + diphosphate</text>
        <dbReference type="Rhea" id="RHEA:11688"/>
        <dbReference type="Rhea" id="RHEA-COMP:9613"/>
        <dbReference type="Rhea" id="RHEA-COMP:9622"/>
        <dbReference type="ChEBI" id="CHEBI:30616"/>
        <dbReference type="ChEBI" id="CHEBI:33019"/>
        <dbReference type="ChEBI" id="CHEBI:57427"/>
        <dbReference type="ChEBI" id="CHEBI:78442"/>
        <dbReference type="ChEBI" id="CHEBI:78494"/>
        <dbReference type="ChEBI" id="CHEBI:456215"/>
        <dbReference type="EC" id="6.1.1.4"/>
    </reaction>
</comment>
<comment type="subcellular location">
    <subcellularLocation>
        <location evidence="1">Cytoplasm</location>
    </subcellularLocation>
</comment>
<comment type="similarity">
    <text evidence="1">Belongs to the class-I aminoacyl-tRNA synthetase family.</text>
</comment>
<comment type="sequence caution" evidence="2">
    <conflict type="erroneous initiation">
        <sequence resource="EMBL-CDS" id="ABJ00057"/>
    </conflict>
</comment>
<proteinExistence type="inferred from homology"/>
<protein>
    <recommendedName>
        <fullName evidence="1">Leucine--tRNA ligase</fullName>
        <ecNumber evidence="1">6.1.1.4</ecNumber>
    </recommendedName>
    <alternativeName>
        <fullName evidence="1">Leucyl-tRNA synthetase</fullName>
        <shortName evidence="1">LeuRS</shortName>
    </alternativeName>
</protein>